<organism>
    <name type="scientific">Platanus occidentalis</name>
    <name type="common">Sycamore</name>
    <name type="synonym">American plane tree</name>
    <dbReference type="NCBI Taxonomy" id="4403"/>
    <lineage>
        <taxon>Eukaryota</taxon>
        <taxon>Viridiplantae</taxon>
        <taxon>Streptophyta</taxon>
        <taxon>Embryophyta</taxon>
        <taxon>Tracheophyta</taxon>
        <taxon>Spermatophyta</taxon>
        <taxon>Magnoliopsida</taxon>
        <taxon>Proteales</taxon>
        <taxon>Platanaceae</taxon>
        <taxon>Platanus</taxon>
    </lineage>
</organism>
<sequence length="154" mass="18019">MINKIKKNPDTEVYALGQHICMSAHKARRVIDQIRGRSYEETLMILELMPYRACYPIFKLVYSAAANASHNMGFNEADLIISKAEVNEGPTMKRLKPRARGRSYPIKRPTCHITIVLKDISLDEEYLIWLRKYGWIYRNKYTDRMCRDKYGIVG</sequence>
<gene>
    <name type="primary">rpl22</name>
</gene>
<name>RK22_PLAOC</name>
<evidence type="ECO:0000250" key="1"/>
<evidence type="ECO:0000305" key="2"/>
<feature type="chain" id="PRO_0000354591" description="Large ribosomal subunit protein uL22c">
    <location>
        <begin position="1"/>
        <end position="154"/>
    </location>
</feature>
<geneLocation type="chloroplast"/>
<dbReference type="EMBL" id="DQ923116">
    <property type="protein sequence ID" value="ABI49819.1"/>
    <property type="molecule type" value="Genomic_DNA"/>
</dbReference>
<dbReference type="RefSeq" id="YP_740605.1">
    <property type="nucleotide sequence ID" value="NC_008335.1"/>
</dbReference>
<dbReference type="SMR" id="Q09G06"/>
<dbReference type="GeneID" id="4271280"/>
<dbReference type="GO" id="GO:0009507">
    <property type="term" value="C:chloroplast"/>
    <property type="evidence" value="ECO:0007669"/>
    <property type="project" value="UniProtKB-SubCell"/>
</dbReference>
<dbReference type="GO" id="GO:0015934">
    <property type="term" value="C:large ribosomal subunit"/>
    <property type="evidence" value="ECO:0007669"/>
    <property type="project" value="InterPro"/>
</dbReference>
<dbReference type="GO" id="GO:0019843">
    <property type="term" value="F:rRNA binding"/>
    <property type="evidence" value="ECO:0007669"/>
    <property type="project" value="UniProtKB-UniRule"/>
</dbReference>
<dbReference type="GO" id="GO:0003735">
    <property type="term" value="F:structural constituent of ribosome"/>
    <property type="evidence" value="ECO:0007669"/>
    <property type="project" value="InterPro"/>
</dbReference>
<dbReference type="GO" id="GO:0006412">
    <property type="term" value="P:translation"/>
    <property type="evidence" value="ECO:0007669"/>
    <property type="project" value="UniProtKB-UniRule"/>
</dbReference>
<dbReference type="CDD" id="cd00336">
    <property type="entry name" value="Ribosomal_L22"/>
    <property type="match status" value="1"/>
</dbReference>
<dbReference type="FunFam" id="3.90.470.10:FF:000006">
    <property type="entry name" value="50S ribosomal protein L22, chloroplastic"/>
    <property type="match status" value="1"/>
</dbReference>
<dbReference type="Gene3D" id="3.90.470.10">
    <property type="entry name" value="Ribosomal protein L22/L17"/>
    <property type="match status" value="1"/>
</dbReference>
<dbReference type="HAMAP" id="MF_01331_B">
    <property type="entry name" value="Ribosomal_uL22_B"/>
    <property type="match status" value="1"/>
</dbReference>
<dbReference type="InterPro" id="IPR001063">
    <property type="entry name" value="Ribosomal_uL22"/>
</dbReference>
<dbReference type="InterPro" id="IPR005727">
    <property type="entry name" value="Ribosomal_uL22_bac/chlpt-type"/>
</dbReference>
<dbReference type="InterPro" id="IPR047867">
    <property type="entry name" value="Ribosomal_uL22_bac/org-type"/>
</dbReference>
<dbReference type="InterPro" id="IPR018260">
    <property type="entry name" value="Ribosomal_uL22_CS"/>
</dbReference>
<dbReference type="InterPro" id="IPR036394">
    <property type="entry name" value="Ribosomal_uL22_sf"/>
</dbReference>
<dbReference type="NCBIfam" id="TIGR01044">
    <property type="entry name" value="rplV_bact"/>
    <property type="match status" value="1"/>
</dbReference>
<dbReference type="PANTHER" id="PTHR13501">
    <property type="entry name" value="CHLOROPLAST 50S RIBOSOMAL PROTEIN L22-RELATED"/>
    <property type="match status" value="1"/>
</dbReference>
<dbReference type="PANTHER" id="PTHR13501:SF10">
    <property type="entry name" value="LARGE RIBOSOMAL SUBUNIT PROTEIN UL22M"/>
    <property type="match status" value="1"/>
</dbReference>
<dbReference type="Pfam" id="PF00237">
    <property type="entry name" value="Ribosomal_L22"/>
    <property type="match status" value="1"/>
</dbReference>
<dbReference type="SUPFAM" id="SSF54843">
    <property type="entry name" value="Ribosomal protein L22"/>
    <property type="match status" value="1"/>
</dbReference>
<dbReference type="PROSITE" id="PS00464">
    <property type="entry name" value="RIBOSOMAL_L22"/>
    <property type="match status" value="1"/>
</dbReference>
<reference key="1">
    <citation type="journal article" date="2006" name="BMC Plant Biol.">
        <title>Rapid and accurate pyrosequencing of angiosperm plastid genomes.</title>
        <authorList>
            <person name="Moore M.J."/>
            <person name="Dhingra A."/>
            <person name="Soltis P.S."/>
            <person name="Shaw R."/>
            <person name="Farmerie W.G."/>
            <person name="Folta K.M."/>
            <person name="Soltis D.E."/>
        </authorList>
    </citation>
    <scope>NUCLEOTIDE SEQUENCE [LARGE SCALE GENOMIC DNA]</scope>
</reference>
<keyword id="KW-0150">Chloroplast</keyword>
<keyword id="KW-0934">Plastid</keyword>
<keyword id="KW-0687">Ribonucleoprotein</keyword>
<keyword id="KW-0689">Ribosomal protein</keyword>
<keyword id="KW-0694">RNA-binding</keyword>
<keyword id="KW-0699">rRNA-binding</keyword>
<proteinExistence type="inferred from homology"/>
<comment type="function">
    <text evidence="1">This protein binds specifically to 23S rRNA.</text>
</comment>
<comment type="function">
    <text evidence="1">The globular domain of the protein is located near the polypeptide exit tunnel on the outside of the subunit, while an extended beta-hairpin is found that lines the wall of the exit tunnel in the center of the 70S ribosome.</text>
</comment>
<comment type="subunit">
    <text evidence="1">Part of the 50S ribosomal subunit.</text>
</comment>
<comment type="subcellular location">
    <subcellularLocation>
        <location>Plastid</location>
        <location>Chloroplast</location>
    </subcellularLocation>
</comment>
<comment type="similarity">
    <text evidence="2">Belongs to the universal ribosomal protein uL22 family.</text>
</comment>
<accession>Q09G06</accession>
<protein>
    <recommendedName>
        <fullName evidence="2">Large ribosomal subunit protein uL22c</fullName>
    </recommendedName>
    <alternativeName>
        <fullName>50S ribosomal protein L22, chloroplastic</fullName>
    </alternativeName>
</protein>